<sequence>MSLAVKDLSTASSSSSKAIPVKIIPLQYPDSTSSDPHCHSIPFNDFFSRWTAKIKRMTFFDWIDAIFPCFLWIRTYRWHQYFKLDLMAGITVGIMLVPQAMSYARLAGLQPIYGLYSSFVPVFVYAVFGSSRQLAVGPVALVSLLVSNALSGIVDPSEELYTELAILLALMVGIFESIMGFLRLGWLIRFISHSVISGFTTASAVVIGLSQLKYFLGYSVSRSSKIMPVIDSIIAGADQFKWPPFLLGCTILVILLVMKHVGKAKKELRFIRAAGPLTGLALGTIIAKVFHPPSITLVGDIPQGLPKFSFPKSFDHAKLLLPTSALITGVAILESVGIAKALAAKNRYELDSNSELFGLGVANIFGSLFSAYPTTGSFSRSAVNSESEAKTGLSGLVTGIIIGCSLLFLTPMFKFIPQCALAAIVISAVSGLVDYEGAIFLWRVDKRDFTLWTITSTTTLFFGIEIGVLIGVGFSLAFVIHESANPHIAVLGRLPGTTVYRNMKQYPEAYTYNGIVIVRIDAPIYFANISYIKDRLREYEVAIDKHTSKGPDMERIYFVILEMSPVTYIDSSAVEALKDLYEEYKTRGIQLAISNPNKEVLLTLARAGIVELIGKEWFFVRVHDAVQVCVHYVNRPTDVEESSKPSLWRRSGLKNSSTYTEVESNIVLEEPLLSREK</sequence>
<reference key="1">
    <citation type="submission" date="2000-12" db="EMBL/GenBank/DDBJ databases">
        <title>cDNA for sulfate transporter Sultr4;2.</title>
        <authorList>
            <person name="Takahashi H."/>
            <person name="Watanabe-Takahashi A."/>
            <person name="Saito K."/>
            <person name="Yamaya T."/>
        </authorList>
    </citation>
    <scope>NUCLEOTIDE SEQUENCE [MRNA] (ISOFORM 1)</scope>
</reference>
<reference key="2">
    <citation type="journal article" date="2000" name="DNA Res.">
        <title>Structural analysis of Arabidopsis thaliana chromosome 3. II. Sequence features of the 4,251,695 bp regions covered by 90 P1, TAC and BAC clones.</title>
        <authorList>
            <person name="Kaneko T."/>
            <person name="Katoh T."/>
            <person name="Sato S."/>
            <person name="Nakamura Y."/>
            <person name="Asamizu E."/>
            <person name="Tabata S."/>
        </authorList>
    </citation>
    <scope>NUCLEOTIDE SEQUENCE [LARGE SCALE GENOMIC DNA]</scope>
    <source>
        <strain>cv. Columbia</strain>
    </source>
</reference>
<reference key="3">
    <citation type="journal article" date="2000" name="Nature">
        <title>Sequence and analysis of chromosome 3 of the plant Arabidopsis thaliana.</title>
        <authorList>
            <person name="Salanoubat M."/>
            <person name="Lemcke K."/>
            <person name="Rieger M."/>
            <person name="Ansorge W."/>
            <person name="Unseld M."/>
            <person name="Fartmann B."/>
            <person name="Valle G."/>
            <person name="Bloecker H."/>
            <person name="Perez-Alonso M."/>
            <person name="Obermaier B."/>
            <person name="Delseny M."/>
            <person name="Boutry M."/>
            <person name="Grivell L.A."/>
            <person name="Mache R."/>
            <person name="Puigdomenech P."/>
            <person name="De Simone V."/>
            <person name="Choisne N."/>
            <person name="Artiguenave F."/>
            <person name="Robert C."/>
            <person name="Brottier P."/>
            <person name="Wincker P."/>
            <person name="Cattolico L."/>
            <person name="Weissenbach J."/>
            <person name="Saurin W."/>
            <person name="Quetier F."/>
            <person name="Schaefer M."/>
            <person name="Mueller-Auer S."/>
            <person name="Gabel C."/>
            <person name="Fuchs M."/>
            <person name="Benes V."/>
            <person name="Wurmbach E."/>
            <person name="Drzonek H."/>
            <person name="Erfle H."/>
            <person name="Jordan N."/>
            <person name="Bangert S."/>
            <person name="Wiedelmann R."/>
            <person name="Kranz H."/>
            <person name="Voss H."/>
            <person name="Holland R."/>
            <person name="Brandt P."/>
            <person name="Nyakatura G."/>
            <person name="Vezzi A."/>
            <person name="D'Angelo M."/>
            <person name="Pallavicini A."/>
            <person name="Toppo S."/>
            <person name="Simionati B."/>
            <person name="Conrad A."/>
            <person name="Hornischer K."/>
            <person name="Kauer G."/>
            <person name="Loehnert T.-H."/>
            <person name="Nordsiek G."/>
            <person name="Reichelt J."/>
            <person name="Scharfe M."/>
            <person name="Schoen O."/>
            <person name="Bargues M."/>
            <person name="Terol J."/>
            <person name="Climent J."/>
            <person name="Navarro P."/>
            <person name="Collado C."/>
            <person name="Perez-Perez A."/>
            <person name="Ottenwaelder B."/>
            <person name="Duchemin D."/>
            <person name="Cooke R."/>
            <person name="Laudie M."/>
            <person name="Berger-Llauro C."/>
            <person name="Purnelle B."/>
            <person name="Masuy D."/>
            <person name="de Haan M."/>
            <person name="Maarse A.C."/>
            <person name="Alcaraz J.-P."/>
            <person name="Cottet A."/>
            <person name="Casacuberta E."/>
            <person name="Monfort A."/>
            <person name="Argiriou A."/>
            <person name="Flores M."/>
            <person name="Liguori R."/>
            <person name="Vitale D."/>
            <person name="Mannhaupt G."/>
            <person name="Haase D."/>
            <person name="Schoof H."/>
            <person name="Rudd S."/>
            <person name="Zaccaria P."/>
            <person name="Mewes H.-W."/>
            <person name="Mayer K.F.X."/>
            <person name="Kaul S."/>
            <person name="Town C.D."/>
            <person name="Koo H.L."/>
            <person name="Tallon L.J."/>
            <person name="Jenkins J."/>
            <person name="Rooney T."/>
            <person name="Rizzo M."/>
            <person name="Walts A."/>
            <person name="Utterback T."/>
            <person name="Fujii C.Y."/>
            <person name="Shea T.P."/>
            <person name="Creasy T.H."/>
            <person name="Haas B."/>
            <person name="Maiti R."/>
            <person name="Wu D."/>
            <person name="Peterson J."/>
            <person name="Van Aken S."/>
            <person name="Pai G."/>
            <person name="Militscher J."/>
            <person name="Sellers P."/>
            <person name="Gill J.E."/>
            <person name="Feldblyum T.V."/>
            <person name="Preuss D."/>
            <person name="Lin X."/>
            <person name="Nierman W.C."/>
            <person name="Salzberg S.L."/>
            <person name="White O."/>
            <person name="Venter J.C."/>
            <person name="Fraser C.M."/>
            <person name="Kaneko T."/>
            <person name="Nakamura Y."/>
            <person name="Sato S."/>
            <person name="Kato T."/>
            <person name="Asamizu E."/>
            <person name="Sasamoto S."/>
            <person name="Kimura T."/>
            <person name="Idesawa K."/>
            <person name="Kawashima K."/>
            <person name="Kishida Y."/>
            <person name="Kiyokawa C."/>
            <person name="Kohara M."/>
            <person name="Matsumoto M."/>
            <person name="Matsuno A."/>
            <person name="Muraki A."/>
            <person name="Nakayama S."/>
            <person name="Nakazaki N."/>
            <person name="Shinpo S."/>
            <person name="Takeuchi C."/>
            <person name="Wada T."/>
            <person name="Watanabe A."/>
            <person name="Yamada M."/>
            <person name="Yasuda M."/>
            <person name="Tabata S."/>
        </authorList>
    </citation>
    <scope>NUCLEOTIDE SEQUENCE [LARGE SCALE GENOMIC DNA]</scope>
    <source>
        <strain>cv. Columbia</strain>
    </source>
</reference>
<reference key="4">
    <citation type="journal article" date="2017" name="Plant J.">
        <title>Araport11: a complete reannotation of the Arabidopsis thaliana reference genome.</title>
        <authorList>
            <person name="Cheng C.Y."/>
            <person name="Krishnakumar V."/>
            <person name="Chan A.P."/>
            <person name="Thibaud-Nissen F."/>
            <person name="Schobel S."/>
            <person name="Town C.D."/>
        </authorList>
    </citation>
    <scope>GENOME REANNOTATION</scope>
    <source>
        <strain>cv. Columbia</strain>
    </source>
</reference>
<reference key="5">
    <citation type="journal article" date="2002" name="Science">
        <title>Functional annotation of a full-length Arabidopsis cDNA collection.</title>
        <authorList>
            <person name="Seki M."/>
            <person name="Narusaka M."/>
            <person name="Kamiya A."/>
            <person name="Ishida J."/>
            <person name="Satou M."/>
            <person name="Sakurai T."/>
            <person name="Nakajima M."/>
            <person name="Enju A."/>
            <person name="Akiyama K."/>
            <person name="Oono Y."/>
            <person name="Muramatsu M."/>
            <person name="Hayashizaki Y."/>
            <person name="Kawai J."/>
            <person name="Carninci P."/>
            <person name="Itoh M."/>
            <person name="Ishii Y."/>
            <person name="Arakawa T."/>
            <person name="Shibata K."/>
            <person name="Shinagawa A."/>
            <person name="Shinozaki K."/>
        </authorList>
    </citation>
    <scope>NUCLEOTIDE SEQUENCE [LARGE SCALE MRNA] (ISOFORM 2)</scope>
    <source>
        <strain>cv. Columbia</strain>
    </source>
</reference>
<protein>
    <recommendedName>
        <fullName>Probable sulfate transporter 4.2</fullName>
    </recommendedName>
</protein>
<feature type="chain" id="PRO_0000080182" description="Probable sulfate transporter 4.2">
    <location>
        <begin position="1"/>
        <end position="677"/>
    </location>
</feature>
<feature type="topological domain" description="Cytoplasmic" evidence="2">
    <location>
        <begin position="1"/>
        <end position="83"/>
    </location>
</feature>
<feature type="transmembrane region" description="Helical" evidence="2">
    <location>
        <begin position="84"/>
        <end position="104"/>
    </location>
</feature>
<feature type="topological domain" description="Extracellular" evidence="2">
    <location>
        <begin position="105"/>
        <end position="108"/>
    </location>
</feature>
<feature type="transmembrane region" description="Helical" evidence="2">
    <location>
        <begin position="109"/>
        <end position="129"/>
    </location>
</feature>
<feature type="topological domain" description="Cytoplasmic" evidence="2">
    <location>
        <begin position="130"/>
        <end position="133"/>
    </location>
</feature>
<feature type="transmembrane region" description="Helical" evidence="2">
    <location>
        <begin position="134"/>
        <end position="154"/>
    </location>
</feature>
<feature type="topological domain" description="Extracellular" evidence="2">
    <location>
        <begin position="155"/>
        <end position="161"/>
    </location>
</feature>
<feature type="transmembrane region" description="Helical" evidence="2">
    <location>
        <begin position="162"/>
        <end position="182"/>
    </location>
</feature>
<feature type="topological domain" description="Cytoplasmic" evidence="2">
    <location>
        <begin position="183"/>
        <end position="189"/>
    </location>
</feature>
<feature type="transmembrane region" description="Helical" evidence="2">
    <location>
        <begin position="190"/>
        <end position="210"/>
    </location>
</feature>
<feature type="topological domain" description="Extracellular" evidence="2">
    <location>
        <begin position="211"/>
        <end position="241"/>
    </location>
</feature>
<feature type="transmembrane region" description="Helical" evidence="2">
    <location>
        <begin position="242"/>
        <end position="262"/>
    </location>
</feature>
<feature type="topological domain" description="Cytoplasmic" evidence="2">
    <location>
        <begin position="263"/>
        <end position="269"/>
    </location>
</feature>
<feature type="transmembrane region" description="Helical" evidence="2">
    <location>
        <begin position="270"/>
        <end position="290"/>
    </location>
</feature>
<feature type="topological domain" description="Extracellular" evidence="2">
    <location>
        <begin position="291"/>
        <end position="318"/>
    </location>
</feature>
<feature type="transmembrane region" description="Helical" evidence="2">
    <location>
        <begin position="319"/>
        <end position="339"/>
    </location>
</feature>
<feature type="topological domain" description="Cytoplasmic" evidence="2">
    <location>
        <begin position="340"/>
        <end position="355"/>
    </location>
</feature>
<feature type="transmembrane region" description="Helical" evidence="2">
    <location>
        <begin position="356"/>
        <end position="376"/>
    </location>
</feature>
<feature type="topological domain" description="Extracellular" evidence="2">
    <location>
        <begin position="377"/>
        <end position="392"/>
    </location>
</feature>
<feature type="transmembrane region" description="Helical" evidence="2">
    <location>
        <begin position="393"/>
        <end position="413"/>
    </location>
</feature>
<feature type="topological domain" description="Cytoplasmic" evidence="2">
    <location>
        <begin position="414"/>
        <end position="420"/>
    </location>
</feature>
<feature type="transmembrane region" description="Helical" evidence="2">
    <location>
        <begin position="421"/>
        <end position="441"/>
    </location>
</feature>
<feature type="topological domain" description="Extracellular" evidence="2">
    <location>
        <begin position="442"/>
        <end position="459"/>
    </location>
</feature>
<feature type="transmembrane region" description="Helical" evidence="2">
    <location>
        <begin position="460"/>
        <end position="480"/>
    </location>
</feature>
<feature type="topological domain" description="Cytoplasmic" evidence="2">
    <location>
        <begin position="481"/>
        <end position="677"/>
    </location>
</feature>
<feature type="domain" description="STAS" evidence="3">
    <location>
        <begin position="505"/>
        <end position="629"/>
    </location>
</feature>
<feature type="splice variant" id="VSP_041589" description="In isoform 2." evidence="4">
    <location>
        <begin position="7"/>
        <end position="22"/>
    </location>
</feature>
<keyword id="KW-0025">Alternative splicing</keyword>
<keyword id="KW-0472">Membrane</keyword>
<keyword id="KW-1185">Reference proteome</keyword>
<keyword id="KW-0764">Sulfate transport</keyword>
<keyword id="KW-0769">Symport</keyword>
<keyword id="KW-0812">Transmembrane</keyword>
<keyword id="KW-1133">Transmembrane helix</keyword>
<keyword id="KW-0813">Transport</keyword>
<evidence type="ECO:0000250" key="1"/>
<evidence type="ECO:0000255" key="2"/>
<evidence type="ECO:0000255" key="3">
    <source>
        <dbReference type="PROSITE-ProRule" id="PRU00198"/>
    </source>
</evidence>
<evidence type="ECO:0000303" key="4">
    <source>
    </source>
</evidence>
<evidence type="ECO:0000305" key="5"/>
<accession>Q8GYH8</accession>
<accession>Q9LHF7</accession>
<comment type="function">
    <text evidence="1">H(+)/sulfate cotransporter that may play a role in the regulation of sulfate assimilation.</text>
</comment>
<comment type="subcellular location">
    <subcellularLocation>
        <location evidence="5">Membrane</location>
        <topology evidence="5">Multi-pass membrane protein</topology>
    </subcellularLocation>
</comment>
<comment type="alternative products">
    <event type="alternative splicing"/>
    <isoform>
        <id>Q8GYH8-1</id>
        <name>1</name>
        <sequence type="displayed"/>
    </isoform>
    <isoform>
        <id>Q8GYH8-2</id>
        <name>2</name>
        <sequence type="described" ref="VSP_041589"/>
    </isoform>
</comment>
<comment type="similarity">
    <text evidence="5">Belongs to the SLC26A/SulP transporter (TC 2.A.53) family.</text>
</comment>
<gene>
    <name type="primary">SULTR4;2</name>
    <name type="ordered locus">At3g12520</name>
    <name type="ORF">MQC3.34</name>
    <name type="ORF">T2E22.36</name>
</gene>
<dbReference type="EMBL" id="AB052775">
    <property type="protein sequence ID" value="BAB19761.1"/>
    <property type="molecule type" value="mRNA"/>
</dbReference>
<dbReference type="EMBL" id="AP002047">
    <property type="protein sequence ID" value="BAB03159.1"/>
    <property type="molecule type" value="Genomic_DNA"/>
</dbReference>
<dbReference type="EMBL" id="AC069474">
    <property type="protein sequence ID" value="AAG51021.1"/>
    <property type="molecule type" value="Genomic_DNA"/>
</dbReference>
<dbReference type="EMBL" id="CP002686">
    <property type="protein sequence ID" value="AEE75205.1"/>
    <property type="molecule type" value="Genomic_DNA"/>
</dbReference>
<dbReference type="EMBL" id="CP002686">
    <property type="protein sequence ID" value="AEE75206.1"/>
    <property type="molecule type" value="Genomic_DNA"/>
</dbReference>
<dbReference type="EMBL" id="AK117615">
    <property type="protein sequence ID" value="BAC42271.1"/>
    <property type="molecule type" value="mRNA"/>
</dbReference>
<dbReference type="RefSeq" id="NP_001189871.1">
    <molecule id="Q8GYH8-2"/>
    <property type="nucleotide sequence ID" value="NM_001202942.1"/>
</dbReference>
<dbReference type="RefSeq" id="NP_187858.1">
    <molecule id="Q8GYH8-1"/>
    <property type="nucleotide sequence ID" value="NM_112087.3"/>
</dbReference>
<dbReference type="SMR" id="Q8GYH8"/>
<dbReference type="FunCoup" id="Q8GYH8">
    <property type="interactions" value="898"/>
</dbReference>
<dbReference type="STRING" id="3702.Q8GYH8"/>
<dbReference type="iPTMnet" id="Q8GYH8"/>
<dbReference type="PaxDb" id="3702-AT3G12520.1"/>
<dbReference type="ProteomicsDB" id="226833">
    <molecule id="Q8GYH8-1"/>
</dbReference>
<dbReference type="EnsemblPlants" id="AT3G12520.1">
    <molecule id="Q8GYH8-1"/>
    <property type="protein sequence ID" value="AT3G12520.1"/>
    <property type="gene ID" value="AT3G12520"/>
</dbReference>
<dbReference type="EnsemblPlants" id="AT3G12520.2">
    <molecule id="Q8GYH8-2"/>
    <property type="protein sequence ID" value="AT3G12520.2"/>
    <property type="gene ID" value="AT3G12520"/>
</dbReference>
<dbReference type="GeneID" id="820431"/>
<dbReference type="Gramene" id="AT3G12520.1">
    <molecule id="Q8GYH8-1"/>
    <property type="protein sequence ID" value="AT3G12520.1"/>
    <property type="gene ID" value="AT3G12520"/>
</dbReference>
<dbReference type="Gramene" id="AT3G12520.2">
    <molecule id="Q8GYH8-2"/>
    <property type="protein sequence ID" value="AT3G12520.2"/>
    <property type="gene ID" value="AT3G12520"/>
</dbReference>
<dbReference type="KEGG" id="ath:AT3G12520"/>
<dbReference type="Araport" id="AT3G12520"/>
<dbReference type="TAIR" id="AT3G12520">
    <property type="gene designation" value="SULTR4"/>
</dbReference>
<dbReference type="eggNOG" id="KOG0236">
    <property type="taxonomic scope" value="Eukaryota"/>
</dbReference>
<dbReference type="InParanoid" id="Q8GYH8"/>
<dbReference type="OMA" id="FSITCLM"/>
<dbReference type="PhylomeDB" id="Q8GYH8"/>
<dbReference type="PRO" id="PR:Q8GYH8"/>
<dbReference type="Proteomes" id="UP000006548">
    <property type="component" value="Chromosome 3"/>
</dbReference>
<dbReference type="ExpressionAtlas" id="Q8GYH8">
    <property type="expression patterns" value="baseline and differential"/>
</dbReference>
<dbReference type="GO" id="GO:0016020">
    <property type="term" value="C:membrane"/>
    <property type="evidence" value="ECO:0007669"/>
    <property type="project" value="UniProtKB-SubCell"/>
</dbReference>
<dbReference type="GO" id="GO:0008271">
    <property type="term" value="F:secondary active sulfate transmembrane transporter activity"/>
    <property type="evidence" value="ECO:0007669"/>
    <property type="project" value="InterPro"/>
</dbReference>
<dbReference type="GO" id="GO:0015293">
    <property type="term" value="F:symporter activity"/>
    <property type="evidence" value="ECO:0007669"/>
    <property type="project" value="UniProtKB-KW"/>
</dbReference>
<dbReference type="CDD" id="cd07042">
    <property type="entry name" value="STAS_SulP_like_sulfate_transporter"/>
    <property type="match status" value="1"/>
</dbReference>
<dbReference type="FunFam" id="3.30.750.24:FF:000002">
    <property type="entry name" value="Sulfate transporter 31"/>
    <property type="match status" value="1"/>
</dbReference>
<dbReference type="Gene3D" id="3.30.750.24">
    <property type="entry name" value="STAS domain"/>
    <property type="match status" value="1"/>
</dbReference>
<dbReference type="InterPro" id="IPR018045">
    <property type="entry name" value="S04_transporter_CS"/>
</dbReference>
<dbReference type="InterPro" id="IPR011547">
    <property type="entry name" value="SLC26A/SulP_dom"/>
</dbReference>
<dbReference type="InterPro" id="IPR001902">
    <property type="entry name" value="SLC26A/SulP_fam"/>
</dbReference>
<dbReference type="InterPro" id="IPR002645">
    <property type="entry name" value="STAS_dom"/>
</dbReference>
<dbReference type="InterPro" id="IPR036513">
    <property type="entry name" value="STAS_dom_sf"/>
</dbReference>
<dbReference type="NCBIfam" id="TIGR00815">
    <property type="entry name" value="sulP"/>
    <property type="match status" value="1"/>
</dbReference>
<dbReference type="PANTHER" id="PTHR11814">
    <property type="entry name" value="SULFATE TRANSPORTER"/>
    <property type="match status" value="1"/>
</dbReference>
<dbReference type="Pfam" id="PF01740">
    <property type="entry name" value="STAS"/>
    <property type="match status" value="1"/>
</dbReference>
<dbReference type="Pfam" id="PF00916">
    <property type="entry name" value="Sulfate_transp"/>
    <property type="match status" value="1"/>
</dbReference>
<dbReference type="SUPFAM" id="SSF52091">
    <property type="entry name" value="SpoIIaa-like"/>
    <property type="match status" value="1"/>
</dbReference>
<dbReference type="PROSITE" id="PS01130">
    <property type="entry name" value="SLC26A"/>
    <property type="match status" value="1"/>
</dbReference>
<dbReference type="PROSITE" id="PS50801">
    <property type="entry name" value="STAS"/>
    <property type="match status" value="1"/>
</dbReference>
<name>SUT42_ARATH</name>
<proteinExistence type="evidence at transcript level"/>
<organism>
    <name type="scientific">Arabidopsis thaliana</name>
    <name type="common">Mouse-ear cress</name>
    <dbReference type="NCBI Taxonomy" id="3702"/>
    <lineage>
        <taxon>Eukaryota</taxon>
        <taxon>Viridiplantae</taxon>
        <taxon>Streptophyta</taxon>
        <taxon>Embryophyta</taxon>
        <taxon>Tracheophyta</taxon>
        <taxon>Spermatophyta</taxon>
        <taxon>Magnoliopsida</taxon>
        <taxon>eudicotyledons</taxon>
        <taxon>Gunneridae</taxon>
        <taxon>Pentapetalae</taxon>
        <taxon>rosids</taxon>
        <taxon>malvids</taxon>
        <taxon>Brassicales</taxon>
        <taxon>Brassicaceae</taxon>
        <taxon>Camelineae</taxon>
        <taxon>Arabidopsis</taxon>
    </lineage>
</organism>